<keyword id="KW-1003">Cell membrane</keyword>
<keyword id="KW-0968">Cytoplasmic vesicle</keyword>
<keyword id="KW-0967">Endosome</keyword>
<keyword id="KW-0378">Hydrolase</keyword>
<keyword id="KW-0443">Lipid metabolism</keyword>
<keyword id="KW-0458">Lysosome</keyword>
<keyword id="KW-0472">Membrane</keyword>
<keyword id="KW-0597">Phosphoprotein</keyword>
<keyword id="KW-1185">Reference proteome</keyword>
<keyword id="KW-0812">Transmembrane</keyword>
<keyword id="KW-1133">Transmembrane helix</keyword>
<organism>
    <name type="scientific">Rattus norvegicus</name>
    <name type="common">Rat</name>
    <dbReference type="NCBI Taxonomy" id="10116"/>
    <lineage>
        <taxon>Eukaryota</taxon>
        <taxon>Metazoa</taxon>
        <taxon>Chordata</taxon>
        <taxon>Craniata</taxon>
        <taxon>Vertebrata</taxon>
        <taxon>Euteleostomi</taxon>
        <taxon>Mammalia</taxon>
        <taxon>Eutheria</taxon>
        <taxon>Euarchontoglires</taxon>
        <taxon>Glires</taxon>
        <taxon>Rodentia</taxon>
        <taxon>Myomorpha</taxon>
        <taxon>Muroidea</taxon>
        <taxon>Muridae</taxon>
        <taxon>Murinae</taxon>
        <taxon>Rattus</taxon>
    </lineage>
</organism>
<dbReference type="EC" id="3.1.3.78" evidence="3"/>
<dbReference type="EMBL" id="BC087604">
    <property type="protein sequence ID" value="AAH87604.1"/>
    <property type="molecule type" value="mRNA"/>
</dbReference>
<dbReference type="RefSeq" id="NP_001014255.1">
    <property type="nucleotide sequence ID" value="NM_001014233.2"/>
</dbReference>
<dbReference type="SMR" id="Q5PPM8"/>
<dbReference type="FunCoup" id="Q5PPM8">
    <property type="interactions" value="3903"/>
</dbReference>
<dbReference type="STRING" id="10116.ENSRNOP00000013225"/>
<dbReference type="iPTMnet" id="Q5PPM8"/>
<dbReference type="PhosphoSitePlus" id="Q5PPM8"/>
<dbReference type="SwissPalm" id="Q5PPM8"/>
<dbReference type="PaxDb" id="10116-ENSRNOP00000013225"/>
<dbReference type="Ensembl" id="ENSRNOT00000013225.7">
    <property type="protein sequence ID" value="ENSRNOP00000013225.5"/>
    <property type="gene ID" value="ENSRNOG00000009948.7"/>
</dbReference>
<dbReference type="GeneID" id="364298"/>
<dbReference type="KEGG" id="rno:364298"/>
<dbReference type="UCSC" id="RGD:1307475">
    <property type="organism name" value="rat"/>
</dbReference>
<dbReference type="AGR" id="RGD:1307475"/>
<dbReference type="CTD" id="90809"/>
<dbReference type="RGD" id="1307475">
    <property type="gene designation" value="Pip4p1"/>
</dbReference>
<dbReference type="eggNOG" id="KOG4684">
    <property type="taxonomic scope" value="Eukaryota"/>
</dbReference>
<dbReference type="GeneTree" id="ENSGT00390000003680"/>
<dbReference type="HOGENOM" id="CLU_087485_0_0_1"/>
<dbReference type="InParanoid" id="Q5PPM8"/>
<dbReference type="OMA" id="CKNSFLW"/>
<dbReference type="OrthoDB" id="9939933at2759"/>
<dbReference type="PhylomeDB" id="Q5PPM8"/>
<dbReference type="TreeFam" id="TF316367"/>
<dbReference type="Reactome" id="R-RNO-6811555">
    <property type="pathway name" value="PI5P Regulates TP53 Acetylation"/>
</dbReference>
<dbReference type="Reactome" id="R-RNO-8847453">
    <property type="pathway name" value="Synthesis of PIPs in the nucleus"/>
</dbReference>
<dbReference type="PRO" id="PR:Q5PPM8"/>
<dbReference type="Proteomes" id="UP000002494">
    <property type="component" value="Chromosome 15"/>
</dbReference>
<dbReference type="Bgee" id="ENSRNOG00000009948">
    <property type="expression patterns" value="Expressed in frontal cortex and 19 other cell types or tissues"/>
</dbReference>
<dbReference type="GO" id="GO:0031902">
    <property type="term" value="C:late endosome membrane"/>
    <property type="evidence" value="ECO:0000250"/>
    <property type="project" value="UniProtKB"/>
</dbReference>
<dbReference type="GO" id="GO:0005765">
    <property type="term" value="C:lysosomal membrane"/>
    <property type="evidence" value="ECO:0000250"/>
    <property type="project" value="UniProtKB"/>
</dbReference>
<dbReference type="GO" id="GO:0030670">
    <property type="term" value="C:phagocytic vesicle membrane"/>
    <property type="evidence" value="ECO:0000250"/>
    <property type="project" value="UniProtKB"/>
</dbReference>
<dbReference type="GO" id="GO:0005886">
    <property type="term" value="C:plasma membrane"/>
    <property type="evidence" value="ECO:0000250"/>
    <property type="project" value="UniProtKB"/>
</dbReference>
<dbReference type="GO" id="GO:0034597">
    <property type="term" value="F:phosphatidylinositol-4,5-bisphosphate 4-phosphatase activity"/>
    <property type="evidence" value="ECO:0000266"/>
    <property type="project" value="RGD"/>
</dbReference>
<dbReference type="GO" id="GO:0008203">
    <property type="term" value="P:cholesterol metabolic process"/>
    <property type="evidence" value="ECO:0000250"/>
    <property type="project" value="UniProtKB"/>
</dbReference>
<dbReference type="GO" id="GO:0032418">
    <property type="term" value="P:lysosome localization"/>
    <property type="evidence" value="ECO:0000250"/>
    <property type="project" value="UniProtKB"/>
</dbReference>
<dbReference type="GO" id="GO:0046856">
    <property type="term" value="P:phosphatidylinositol dephosphorylation"/>
    <property type="evidence" value="ECO:0000266"/>
    <property type="project" value="RGD"/>
</dbReference>
<dbReference type="GO" id="GO:1904263">
    <property type="term" value="P:positive regulation of TORC1 signaling"/>
    <property type="evidence" value="ECO:0000250"/>
    <property type="project" value="UniProtKB"/>
</dbReference>
<dbReference type="GO" id="GO:0070070">
    <property type="term" value="P:proton-transporting V-type ATPase complex assembly"/>
    <property type="evidence" value="ECO:0000250"/>
    <property type="project" value="UniProtKB"/>
</dbReference>
<dbReference type="GO" id="GO:0006991">
    <property type="term" value="P:response to sterol depletion"/>
    <property type="evidence" value="ECO:0000250"/>
    <property type="project" value="UniProtKB"/>
</dbReference>
<dbReference type="InterPro" id="IPR019178">
    <property type="entry name" value="PtdIns-P2-Ptase"/>
</dbReference>
<dbReference type="PANTHER" id="PTHR21014">
    <property type="entry name" value="PHOSPHATIDYLINOSITOL-4,5-BISPHOSPHATE 4-PHOSPHATASE"/>
    <property type="match status" value="1"/>
</dbReference>
<dbReference type="PANTHER" id="PTHR21014:SF2">
    <property type="entry name" value="TYPE 1 PHOSPHATIDYLINOSITOL 4,5-BISPHOSPHATE 4-PHOSPHATASE"/>
    <property type="match status" value="1"/>
</dbReference>
<dbReference type="Pfam" id="PF09788">
    <property type="entry name" value="Tmemb_55A"/>
    <property type="match status" value="1"/>
</dbReference>
<reference key="1">
    <citation type="journal article" date="2004" name="Genome Res.">
        <title>The status, quality, and expansion of the NIH full-length cDNA project: the Mammalian Gene Collection (MGC).</title>
        <authorList>
            <consortium name="The MGC Project Team"/>
        </authorList>
    </citation>
    <scope>NUCLEOTIDE SEQUENCE [LARGE SCALE MRNA]</scope>
    <source>
        <tissue>Brain</tissue>
    </source>
</reference>
<reference key="2">
    <citation type="journal article" date="2012" name="Nat. Commun.">
        <title>Quantitative maps of protein phosphorylation sites across 14 different rat organs and tissues.</title>
        <authorList>
            <person name="Lundby A."/>
            <person name="Secher A."/>
            <person name="Lage K."/>
            <person name="Nordsborg N.B."/>
            <person name="Dmytriyev A."/>
            <person name="Lundby C."/>
            <person name="Olsen J.V."/>
        </authorList>
    </citation>
    <scope>PHOSPHORYLATION [LARGE SCALE ANALYSIS] AT SER-169</scope>
    <scope>IDENTIFICATION BY MASS SPECTROMETRY [LARGE SCALE ANALYSIS]</scope>
</reference>
<sequence length="284" mass="29993">MAADGERSPLLSEAGDGGAGGNGLAGPGGSATGPGGGLTPSAPPYGAGKHAPPQAFPPFPEGHPAVLPGEDPPPYSPLTSPDSGSAPMITCRVCQSPINVEGKMHQHVVKCGVCNEATPIKNAPPGKKYVRCPCNCLLICKVTSQRIACPRPYCKRIINLGPVHPGPLSPEPQPMGVRVICGHCKNTFLWTEFTDRTLARCPHCRKVSSIGRRYPRKRCICCFLLGLLLAVTATGLAFGTWKPAQQYGGIYAAWAFVILLAVLCLGRALYWGCMKVSHPVQNFS</sequence>
<proteinExistence type="evidence at protein level"/>
<comment type="function">
    <text evidence="3">Catalyzes the hydrolysis of phosphatidylinositol-4,5-bisphosphate (PtdIns-4,5-P2) to phosphatidylinositol-4-phosphate (PtdIns-4-P) (By similarity). Does not hydrolyze phosphatidylinositol 3,4,5-trisphosphate, phosphatidylinositol 3,4-bisphosphate, inositol 3,5-bisphosphate, inositol 3,4-bisphosphate, phosphatidylinositol 5-monophosphate, phosphatidylinositol 4-monophosphate and phosphatidylinositol 3-monophosphate (By similarity). Regulates lysosomal positioning by recruiting JIP4 to lysosomal membranes, thus inducing retrograde transport of lysosomes along microtubules (By similarity). Contributes to assembly of the V-ATPase complex in lipid rafts of the lysosomal membrane and to subsequent amino acid-dependent activation of mTORC1 (By similarity). May play a role in the regulation of cellular cholesterol metabolism (By similarity).</text>
</comment>
<comment type="catalytic activity">
    <reaction evidence="3">
        <text>a 1,2-diacyl-sn-glycero-3-phospho-(1D-myo-inositol-4,5-bisphosphate) + H2O = a 1,2-diacyl-sn-glycero-3-phospho-(1D-myo-inositol-5-phosphate) + phosphate</text>
        <dbReference type="Rhea" id="RHEA:25674"/>
        <dbReference type="ChEBI" id="CHEBI:15377"/>
        <dbReference type="ChEBI" id="CHEBI:43474"/>
        <dbReference type="ChEBI" id="CHEBI:57795"/>
        <dbReference type="ChEBI" id="CHEBI:58456"/>
        <dbReference type="EC" id="3.1.3.78"/>
    </reaction>
</comment>
<comment type="subunit">
    <text evidence="2">Interacts (via transmembrane domain) with ATP6V0D1 (By similarity). Interacts with LAMTOR1, RRAGA and RRAGC (By similarity).</text>
</comment>
<comment type="subcellular location">
    <subcellularLocation>
        <location evidence="2">Late endosome membrane</location>
        <topology evidence="4">Multi-pass membrane protein</topology>
    </subcellularLocation>
    <subcellularLocation>
        <location evidence="2">Lysosome membrane</location>
        <topology evidence="4">Multi-pass membrane protein</topology>
    </subcellularLocation>
    <subcellularLocation>
        <location evidence="2">Cytoplasmic vesicle</location>
        <location evidence="2">Phagosome membrane</location>
        <topology evidence="4">Multi-pass membrane protein</topology>
    </subcellularLocation>
    <subcellularLocation>
        <location evidence="2">Cell membrane</location>
        <topology evidence="4">Multi-pass membrane protein</topology>
    </subcellularLocation>
</comment>
<protein>
    <recommendedName>
        <fullName>Type 1 phosphatidylinositol 4,5-bisphosphate 4-phosphatase</fullName>
        <shortName>Type 1 PtdIns-4,5-P2 4-Ptase</shortName>
        <ecNumber evidence="3">3.1.3.78</ecNumber>
    </recommendedName>
    <alternativeName>
        <fullName>PtdIns-4,5-P2 4-Ptase I</fullName>
    </alternativeName>
    <alternativeName>
        <fullName>Transmembrane protein 55B</fullName>
    </alternativeName>
</protein>
<name>PP4P1_RAT</name>
<accession>Q5PPM8</accession>
<gene>
    <name evidence="3" type="primary">Pip4p1</name>
    <name type="synonym">Tmem55b</name>
</gene>
<feature type="chain" id="PRO_0000072580" description="Type 1 phosphatidylinositol 4,5-bisphosphate 4-phosphatase">
    <location>
        <begin position="1"/>
        <end position="284"/>
    </location>
</feature>
<feature type="transmembrane region" description="Helical" evidence="4">
    <location>
        <begin position="219"/>
        <end position="239"/>
    </location>
</feature>
<feature type="transmembrane region" description="Helical" evidence="4">
    <location>
        <begin position="246"/>
        <end position="266"/>
    </location>
</feature>
<feature type="region of interest" description="Disordered" evidence="5">
    <location>
        <begin position="1"/>
        <end position="82"/>
    </location>
</feature>
<feature type="short sequence motif" description="CX5R motif">
    <location>
        <begin position="140"/>
        <end position="146"/>
    </location>
</feature>
<feature type="compositionally biased region" description="Gly residues" evidence="5">
    <location>
        <begin position="15"/>
        <end position="38"/>
    </location>
</feature>
<feature type="active site" evidence="1">
    <location>
        <position position="140"/>
    </location>
</feature>
<feature type="modified residue" description="Phosphoserine" evidence="6">
    <location>
        <position position="169"/>
    </location>
</feature>
<evidence type="ECO:0000250" key="1"/>
<evidence type="ECO:0000250" key="2">
    <source>
        <dbReference type="UniProtKB" id="Q3TWL2"/>
    </source>
</evidence>
<evidence type="ECO:0000250" key="3">
    <source>
        <dbReference type="UniProtKB" id="Q86T03"/>
    </source>
</evidence>
<evidence type="ECO:0000255" key="4"/>
<evidence type="ECO:0000256" key="5">
    <source>
        <dbReference type="SAM" id="MobiDB-lite"/>
    </source>
</evidence>
<evidence type="ECO:0007744" key="6">
    <source>
    </source>
</evidence>